<reference key="1">
    <citation type="journal article" date="2002" name="DNA Res.">
        <title>Complete genomic sequence of nitrogen-fixing symbiotic bacterium Bradyrhizobium japonicum USDA110.</title>
        <authorList>
            <person name="Kaneko T."/>
            <person name="Nakamura Y."/>
            <person name="Sato S."/>
            <person name="Minamisawa K."/>
            <person name="Uchiumi T."/>
            <person name="Sasamoto S."/>
            <person name="Watanabe A."/>
            <person name="Idesawa K."/>
            <person name="Iriguchi M."/>
            <person name="Kawashima K."/>
            <person name="Kohara M."/>
            <person name="Matsumoto M."/>
            <person name="Shimpo S."/>
            <person name="Tsuruoka H."/>
            <person name="Wada T."/>
            <person name="Yamada M."/>
            <person name="Tabata S."/>
        </authorList>
    </citation>
    <scope>NUCLEOTIDE SEQUENCE [LARGE SCALE GENOMIC DNA]</scope>
    <source>
        <strain>JCM 10833 / BCRC 13528 / IAM 13628 / NBRC 14792 / USDA 110</strain>
    </source>
</reference>
<proteinExistence type="inferred from homology"/>
<accession>Q89FC4</accession>
<evidence type="ECO:0000255" key="1">
    <source>
        <dbReference type="HAMAP-Rule" id="MF_00276"/>
    </source>
</evidence>
<keyword id="KW-0067">ATP-binding</keyword>
<keyword id="KW-0997">Cell inner membrane</keyword>
<keyword id="KW-1003">Cell membrane</keyword>
<keyword id="KW-0406">Ion transport</keyword>
<keyword id="KW-0472">Membrane</keyword>
<keyword id="KW-0547">Nucleotide-binding</keyword>
<keyword id="KW-0630">Potassium</keyword>
<keyword id="KW-0633">Potassium transport</keyword>
<keyword id="KW-1185">Reference proteome</keyword>
<keyword id="KW-0812">Transmembrane</keyword>
<keyword id="KW-1133">Transmembrane helix</keyword>
<keyword id="KW-0813">Transport</keyword>
<sequence length="201" mass="21017">MLREIRPAIVLLLVLTAITGLAYPLAMTGIAGMLFPAQAQGSLIEKDGKVIGSALIGQEFKDDKYFHGRPSATLAPDPNDSTKTVSAPYNAANSGGSNLGPTSKALADRLKEDVDKLKAENPNAAVPVDLVTTSASGLDPDISPEAAQFQVPRVAKARNMPEEAVKQLVASNVQGRLLGLLGEPRVNVLALNLALDRAAAK</sequence>
<comment type="function">
    <text evidence="1">Part of the high-affinity ATP-driven potassium transport (or Kdp) system, which catalyzes the hydrolysis of ATP coupled with the electrogenic transport of potassium into the cytoplasm. This subunit acts as a catalytic chaperone that increases the ATP-binding affinity of the ATP-hydrolyzing subunit KdpB by the formation of a transient KdpB/KdpC/ATP ternary complex.</text>
</comment>
<comment type="subunit">
    <text evidence="1">The system is composed of three essential subunits: KdpA, KdpB and KdpC.</text>
</comment>
<comment type="subcellular location">
    <subcellularLocation>
        <location evidence="1">Cell inner membrane</location>
        <topology evidence="1">Single-pass membrane protein</topology>
    </subcellularLocation>
</comment>
<comment type="similarity">
    <text evidence="1">Belongs to the KdpC family.</text>
</comment>
<feature type="chain" id="PRO_0000196986" description="Potassium-transporting ATPase KdpC subunit">
    <location>
        <begin position="1"/>
        <end position="201"/>
    </location>
</feature>
<feature type="transmembrane region" description="Helical" evidence="1">
    <location>
        <begin position="7"/>
        <end position="27"/>
    </location>
</feature>
<dbReference type="EMBL" id="BA000040">
    <property type="protein sequence ID" value="BAC52042.1"/>
    <property type="molecule type" value="Genomic_DNA"/>
</dbReference>
<dbReference type="RefSeq" id="NP_773417.1">
    <property type="nucleotide sequence ID" value="NC_004463.1"/>
</dbReference>
<dbReference type="RefSeq" id="WP_011089516.1">
    <property type="nucleotide sequence ID" value="NC_004463.1"/>
</dbReference>
<dbReference type="SMR" id="Q89FC4"/>
<dbReference type="FunCoup" id="Q89FC4">
    <property type="interactions" value="304"/>
</dbReference>
<dbReference type="STRING" id="224911.AAV28_31485"/>
<dbReference type="EnsemblBacteria" id="BAC52042">
    <property type="protein sequence ID" value="BAC52042"/>
    <property type="gene ID" value="BAC52042"/>
</dbReference>
<dbReference type="GeneID" id="46493751"/>
<dbReference type="KEGG" id="bja:bll6777"/>
<dbReference type="PATRIC" id="fig|224911.44.peg.6800"/>
<dbReference type="eggNOG" id="COG2156">
    <property type="taxonomic scope" value="Bacteria"/>
</dbReference>
<dbReference type="HOGENOM" id="CLU_077094_2_0_5"/>
<dbReference type="InParanoid" id="Q89FC4"/>
<dbReference type="OrthoDB" id="9788285at2"/>
<dbReference type="PhylomeDB" id="Q89FC4"/>
<dbReference type="Proteomes" id="UP000002526">
    <property type="component" value="Chromosome"/>
</dbReference>
<dbReference type="GO" id="GO:0005886">
    <property type="term" value="C:plasma membrane"/>
    <property type="evidence" value="ECO:0007669"/>
    <property type="project" value="UniProtKB-SubCell"/>
</dbReference>
<dbReference type="GO" id="GO:0005524">
    <property type="term" value="F:ATP binding"/>
    <property type="evidence" value="ECO:0007669"/>
    <property type="project" value="UniProtKB-UniRule"/>
</dbReference>
<dbReference type="GO" id="GO:0008556">
    <property type="term" value="F:P-type potassium transmembrane transporter activity"/>
    <property type="evidence" value="ECO:0000318"/>
    <property type="project" value="GO_Central"/>
</dbReference>
<dbReference type="GO" id="GO:0071805">
    <property type="term" value="P:potassium ion transmembrane transport"/>
    <property type="evidence" value="ECO:0000318"/>
    <property type="project" value="GO_Central"/>
</dbReference>
<dbReference type="HAMAP" id="MF_00276">
    <property type="entry name" value="KdpC"/>
    <property type="match status" value="1"/>
</dbReference>
<dbReference type="InterPro" id="IPR003820">
    <property type="entry name" value="KdpC"/>
</dbReference>
<dbReference type="NCBIfam" id="TIGR00681">
    <property type="entry name" value="kdpC"/>
    <property type="match status" value="1"/>
</dbReference>
<dbReference type="NCBIfam" id="NF001454">
    <property type="entry name" value="PRK00315.1"/>
    <property type="match status" value="1"/>
</dbReference>
<dbReference type="NCBIfam" id="NF010603">
    <property type="entry name" value="PRK13999.1"/>
    <property type="match status" value="1"/>
</dbReference>
<dbReference type="PANTHER" id="PTHR30042">
    <property type="entry name" value="POTASSIUM-TRANSPORTING ATPASE C CHAIN"/>
    <property type="match status" value="1"/>
</dbReference>
<dbReference type="PANTHER" id="PTHR30042:SF2">
    <property type="entry name" value="POTASSIUM-TRANSPORTING ATPASE KDPC SUBUNIT"/>
    <property type="match status" value="1"/>
</dbReference>
<dbReference type="Pfam" id="PF02669">
    <property type="entry name" value="KdpC"/>
    <property type="match status" value="1"/>
</dbReference>
<dbReference type="PIRSF" id="PIRSF001296">
    <property type="entry name" value="K_ATPase_KdpC"/>
    <property type="match status" value="1"/>
</dbReference>
<protein>
    <recommendedName>
        <fullName evidence="1">Potassium-transporting ATPase KdpC subunit</fullName>
    </recommendedName>
    <alternativeName>
        <fullName evidence="1">ATP phosphohydrolase [potassium-transporting] C chain</fullName>
    </alternativeName>
    <alternativeName>
        <fullName evidence="1">Potassium-binding and translocating subunit C</fullName>
    </alternativeName>
    <alternativeName>
        <fullName evidence="1">Potassium-translocating ATPase C chain</fullName>
    </alternativeName>
</protein>
<name>KDPC_BRADU</name>
<gene>
    <name evidence="1" type="primary">kdpC</name>
    <name type="ordered locus">bll6777</name>
</gene>
<organism>
    <name type="scientific">Bradyrhizobium diazoefficiens (strain JCM 10833 / BCRC 13528 / IAM 13628 / NBRC 14792 / USDA 110)</name>
    <dbReference type="NCBI Taxonomy" id="224911"/>
    <lineage>
        <taxon>Bacteria</taxon>
        <taxon>Pseudomonadati</taxon>
        <taxon>Pseudomonadota</taxon>
        <taxon>Alphaproteobacteria</taxon>
        <taxon>Hyphomicrobiales</taxon>
        <taxon>Nitrobacteraceae</taxon>
        <taxon>Bradyrhizobium</taxon>
    </lineage>
</organism>